<organism>
    <name type="scientific">Thermotoga sp. (strain RQ2)</name>
    <dbReference type="NCBI Taxonomy" id="126740"/>
    <lineage>
        <taxon>Bacteria</taxon>
        <taxon>Thermotogati</taxon>
        <taxon>Thermotogota</taxon>
        <taxon>Thermotogae</taxon>
        <taxon>Thermotogales</taxon>
        <taxon>Thermotogaceae</taxon>
        <taxon>Thermotoga</taxon>
    </lineage>
</organism>
<evidence type="ECO:0000255" key="1">
    <source>
        <dbReference type="HAMAP-Rule" id="MF_00321"/>
    </source>
</evidence>
<feature type="chain" id="PRO_1000116012" description="Probable GTP-binding protein EngB">
    <location>
        <begin position="1"/>
        <end position="195"/>
    </location>
</feature>
<feature type="domain" description="EngB-type G" evidence="1">
    <location>
        <begin position="22"/>
        <end position="194"/>
    </location>
</feature>
<feature type="binding site" evidence="1">
    <location>
        <begin position="30"/>
        <end position="37"/>
    </location>
    <ligand>
        <name>GTP</name>
        <dbReference type="ChEBI" id="CHEBI:37565"/>
    </ligand>
</feature>
<feature type="binding site" evidence="1">
    <location>
        <position position="37"/>
    </location>
    <ligand>
        <name>Mg(2+)</name>
        <dbReference type="ChEBI" id="CHEBI:18420"/>
    </ligand>
</feature>
<feature type="binding site" evidence="1">
    <location>
        <begin position="56"/>
        <end position="60"/>
    </location>
    <ligand>
        <name>GTP</name>
        <dbReference type="ChEBI" id="CHEBI:37565"/>
    </ligand>
</feature>
<feature type="binding site" evidence="1">
    <location>
        <position position="58"/>
    </location>
    <ligand>
        <name>Mg(2+)</name>
        <dbReference type="ChEBI" id="CHEBI:18420"/>
    </ligand>
</feature>
<feature type="binding site" evidence="1">
    <location>
        <begin position="74"/>
        <end position="77"/>
    </location>
    <ligand>
        <name>GTP</name>
        <dbReference type="ChEBI" id="CHEBI:37565"/>
    </ligand>
</feature>
<feature type="binding site" evidence="1">
    <location>
        <begin position="141"/>
        <end position="144"/>
    </location>
    <ligand>
        <name>GTP</name>
        <dbReference type="ChEBI" id="CHEBI:37565"/>
    </ligand>
</feature>
<feature type="binding site" evidence="1">
    <location>
        <begin position="173"/>
        <end position="175"/>
    </location>
    <ligand>
        <name>GTP</name>
        <dbReference type="ChEBI" id="CHEBI:37565"/>
    </ligand>
</feature>
<sequence length="195" mass="22530">MIIRDVELVKIARTPGDYPPPLKGEVAFVGRSNVGKSSLLNALFNRKVAFVSKTPGKTRSINFYLVNSKYYFVDLPGYGYAKVSKKERMLWKRLVEDYFKNRWSLQMVFLLVDGRIPPQDSDFMMIEWMKSLNIPFTIVLTKMDKVKMSERAKKLEEHRKVFSRYGEYTIIPTSSVTGEGISELLDLISTLLKEN</sequence>
<gene>
    <name evidence="1" type="primary">engB</name>
    <name type="ordered locus">TRQ2_1359</name>
</gene>
<comment type="function">
    <text evidence="1">Necessary for normal cell division and for the maintenance of normal septation.</text>
</comment>
<comment type="cofactor">
    <cofactor evidence="1">
        <name>Mg(2+)</name>
        <dbReference type="ChEBI" id="CHEBI:18420"/>
    </cofactor>
</comment>
<comment type="similarity">
    <text evidence="1">Belongs to the TRAFAC class TrmE-Era-EngA-EngB-Septin-like GTPase superfamily. EngB GTPase family.</text>
</comment>
<accession>B1LBK5</accession>
<protein>
    <recommendedName>
        <fullName evidence="1">Probable GTP-binding protein EngB</fullName>
    </recommendedName>
</protein>
<dbReference type="EMBL" id="CP000969">
    <property type="protein sequence ID" value="ACB09703.1"/>
    <property type="molecule type" value="Genomic_DNA"/>
</dbReference>
<dbReference type="SMR" id="B1LBK5"/>
<dbReference type="KEGG" id="trq:TRQ2_1359"/>
<dbReference type="HOGENOM" id="CLU_033732_3_0_0"/>
<dbReference type="Proteomes" id="UP000001687">
    <property type="component" value="Chromosome"/>
</dbReference>
<dbReference type="GO" id="GO:0005829">
    <property type="term" value="C:cytosol"/>
    <property type="evidence" value="ECO:0007669"/>
    <property type="project" value="TreeGrafter"/>
</dbReference>
<dbReference type="GO" id="GO:0005525">
    <property type="term" value="F:GTP binding"/>
    <property type="evidence" value="ECO:0007669"/>
    <property type="project" value="UniProtKB-UniRule"/>
</dbReference>
<dbReference type="GO" id="GO:0046872">
    <property type="term" value="F:metal ion binding"/>
    <property type="evidence" value="ECO:0007669"/>
    <property type="project" value="UniProtKB-KW"/>
</dbReference>
<dbReference type="GO" id="GO:0000917">
    <property type="term" value="P:division septum assembly"/>
    <property type="evidence" value="ECO:0007669"/>
    <property type="project" value="UniProtKB-KW"/>
</dbReference>
<dbReference type="CDD" id="cd01876">
    <property type="entry name" value="YihA_EngB"/>
    <property type="match status" value="1"/>
</dbReference>
<dbReference type="FunFam" id="3.40.50.300:FF:000098">
    <property type="entry name" value="Probable GTP-binding protein EngB"/>
    <property type="match status" value="1"/>
</dbReference>
<dbReference type="Gene3D" id="3.40.50.300">
    <property type="entry name" value="P-loop containing nucleotide triphosphate hydrolases"/>
    <property type="match status" value="1"/>
</dbReference>
<dbReference type="HAMAP" id="MF_00321">
    <property type="entry name" value="GTPase_EngB"/>
    <property type="match status" value="1"/>
</dbReference>
<dbReference type="InterPro" id="IPR030393">
    <property type="entry name" value="G_ENGB_dom"/>
</dbReference>
<dbReference type="InterPro" id="IPR006073">
    <property type="entry name" value="GTP-bd"/>
</dbReference>
<dbReference type="InterPro" id="IPR019987">
    <property type="entry name" value="GTP-bd_ribosome_bio_YsxC"/>
</dbReference>
<dbReference type="InterPro" id="IPR027417">
    <property type="entry name" value="P-loop_NTPase"/>
</dbReference>
<dbReference type="InterPro" id="IPR005225">
    <property type="entry name" value="Small_GTP-bd"/>
</dbReference>
<dbReference type="NCBIfam" id="TIGR03598">
    <property type="entry name" value="GTPase_YsxC"/>
    <property type="match status" value="1"/>
</dbReference>
<dbReference type="NCBIfam" id="TIGR00231">
    <property type="entry name" value="small_GTP"/>
    <property type="match status" value="1"/>
</dbReference>
<dbReference type="PANTHER" id="PTHR11649:SF13">
    <property type="entry name" value="ENGB-TYPE G DOMAIN-CONTAINING PROTEIN"/>
    <property type="match status" value="1"/>
</dbReference>
<dbReference type="PANTHER" id="PTHR11649">
    <property type="entry name" value="MSS1/TRME-RELATED GTP-BINDING PROTEIN"/>
    <property type="match status" value="1"/>
</dbReference>
<dbReference type="Pfam" id="PF01926">
    <property type="entry name" value="MMR_HSR1"/>
    <property type="match status" value="1"/>
</dbReference>
<dbReference type="SUPFAM" id="SSF52540">
    <property type="entry name" value="P-loop containing nucleoside triphosphate hydrolases"/>
    <property type="match status" value="1"/>
</dbReference>
<dbReference type="PROSITE" id="PS51706">
    <property type="entry name" value="G_ENGB"/>
    <property type="match status" value="1"/>
</dbReference>
<keyword id="KW-0131">Cell cycle</keyword>
<keyword id="KW-0132">Cell division</keyword>
<keyword id="KW-0342">GTP-binding</keyword>
<keyword id="KW-0460">Magnesium</keyword>
<keyword id="KW-0479">Metal-binding</keyword>
<keyword id="KW-0547">Nucleotide-binding</keyword>
<keyword id="KW-0717">Septation</keyword>
<reference key="1">
    <citation type="journal article" date="2011" name="J. Bacteriol.">
        <title>Genome sequence of Thermotoga sp. strain RQ2, a hyperthermophilic bacterium isolated from a geothermally heated region of the seafloor near Ribeira Quente, the Azores.</title>
        <authorList>
            <person name="Swithers K.S."/>
            <person name="DiPippo J.L."/>
            <person name="Bruce D.C."/>
            <person name="Detter C."/>
            <person name="Tapia R."/>
            <person name="Han S."/>
            <person name="Saunders E."/>
            <person name="Goodwin L.A."/>
            <person name="Han J."/>
            <person name="Woyke T."/>
            <person name="Pitluck S."/>
            <person name="Pennacchio L."/>
            <person name="Nolan M."/>
            <person name="Mikhailova N."/>
            <person name="Lykidis A."/>
            <person name="Land M.L."/>
            <person name="Brettin T."/>
            <person name="Stetter K.O."/>
            <person name="Nelson K.E."/>
            <person name="Gogarten J.P."/>
            <person name="Noll K.M."/>
        </authorList>
    </citation>
    <scope>NUCLEOTIDE SEQUENCE [LARGE SCALE GENOMIC DNA]</scope>
    <source>
        <strain>RQ2</strain>
    </source>
</reference>
<name>ENGB_THESQ</name>
<proteinExistence type="inferred from homology"/>